<gene>
    <name type="ordered locus">Helmi_20270</name>
    <name type="ORF">HM1_2095</name>
</gene>
<keyword id="KW-1185">Reference proteome</keyword>
<protein>
    <recommendedName>
        <fullName evidence="1">UPF0235 protein Helmi_20270</fullName>
    </recommendedName>
</protein>
<organism>
    <name type="scientific">Heliobacterium modesticaldum (strain ATCC 51547 / Ice1)</name>
    <dbReference type="NCBI Taxonomy" id="498761"/>
    <lineage>
        <taxon>Bacteria</taxon>
        <taxon>Bacillati</taxon>
        <taxon>Bacillota</taxon>
        <taxon>Clostridia</taxon>
        <taxon>Eubacteriales</taxon>
        <taxon>Heliobacteriaceae</taxon>
        <taxon>Heliomicrobium</taxon>
    </lineage>
</organism>
<comment type="similarity">
    <text evidence="1">Belongs to the UPF0235 family.</text>
</comment>
<name>Y2027_HELMI</name>
<accession>B0TGP1</accession>
<proteinExistence type="inferred from homology"/>
<reference key="1">
    <citation type="journal article" date="2008" name="J. Bacteriol.">
        <title>The genome of Heliobacterium modesticaldum, a phototrophic representative of the Firmicutes containing the simplest photosynthetic apparatus.</title>
        <authorList>
            <person name="Sattley W.M."/>
            <person name="Madigan M.T."/>
            <person name="Swingley W.D."/>
            <person name="Cheung P.C."/>
            <person name="Clocksin K.M."/>
            <person name="Conrad A.L."/>
            <person name="Dejesa L.C."/>
            <person name="Honchak B.M."/>
            <person name="Jung D.O."/>
            <person name="Karbach L.E."/>
            <person name="Kurdoglu A."/>
            <person name="Lahiri S."/>
            <person name="Mastrian S.D."/>
            <person name="Page L.E."/>
            <person name="Taylor H.L."/>
            <person name="Wang Z.T."/>
            <person name="Raymond J."/>
            <person name="Chen M."/>
            <person name="Blankenship R.E."/>
            <person name="Touchman J.W."/>
        </authorList>
    </citation>
    <scope>NUCLEOTIDE SEQUENCE [LARGE SCALE GENOMIC DNA]</scope>
    <source>
        <strain>ATCC 51547 / Ice1</strain>
    </source>
</reference>
<dbReference type="EMBL" id="CP000930">
    <property type="protein sequence ID" value="ABZ84652.1"/>
    <property type="molecule type" value="Genomic_DNA"/>
</dbReference>
<dbReference type="RefSeq" id="WP_012283152.1">
    <property type="nucleotide sequence ID" value="NC_010337.2"/>
</dbReference>
<dbReference type="SMR" id="B0TGP1"/>
<dbReference type="STRING" id="498761.HM1_2095"/>
<dbReference type="KEGG" id="hmo:HM1_2095"/>
<dbReference type="eggNOG" id="COG1872">
    <property type="taxonomic scope" value="Bacteria"/>
</dbReference>
<dbReference type="HOGENOM" id="CLU_130694_6_0_9"/>
<dbReference type="OrthoDB" id="9800587at2"/>
<dbReference type="Proteomes" id="UP000008550">
    <property type="component" value="Chromosome"/>
</dbReference>
<dbReference type="GO" id="GO:0005737">
    <property type="term" value="C:cytoplasm"/>
    <property type="evidence" value="ECO:0007669"/>
    <property type="project" value="TreeGrafter"/>
</dbReference>
<dbReference type="Gene3D" id="3.30.1200.10">
    <property type="entry name" value="YggU-like"/>
    <property type="match status" value="1"/>
</dbReference>
<dbReference type="HAMAP" id="MF_00634">
    <property type="entry name" value="UPF0235"/>
    <property type="match status" value="1"/>
</dbReference>
<dbReference type="InterPro" id="IPR003746">
    <property type="entry name" value="DUF167"/>
</dbReference>
<dbReference type="InterPro" id="IPR036591">
    <property type="entry name" value="YggU-like_sf"/>
</dbReference>
<dbReference type="NCBIfam" id="TIGR00251">
    <property type="entry name" value="DUF167 family protein"/>
    <property type="match status" value="1"/>
</dbReference>
<dbReference type="PANTHER" id="PTHR13420">
    <property type="entry name" value="UPF0235 PROTEIN C15ORF40"/>
    <property type="match status" value="1"/>
</dbReference>
<dbReference type="PANTHER" id="PTHR13420:SF7">
    <property type="entry name" value="UPF0235 PROTEIN C15ORF40"/>
    <property type="match status" value="1"/>
</dbReference>
<dbReference type="Pfam" id="PF02594">
    <property type="entry name" value="DUF167"/>
    <property type="match status" value="1"/>
</dbReference>
<dbReference type="SMART" id="SM01152">
    <property type="entry name" value="DUF167"/>
    <property type="match status" value="1"/>
</dbReference>
<dbReference type="SUPFAM" id="SSF69786">
    <property type="entry name" value="YggU-like"/>
    <property type="match status" value="1"/>
</dbReference>
<sequence>MGWIQEQPGGSIRFRIRVQPRASKNEVCGLLDDALKVRLTAPPVDGEANAACLQFIAKTLGLSRSQVRLVAGETSRLKTLEVEGVSAEDLRKRFDI</sequence>
<evidence type="ECO:0000255" key="1">
    <source>
        <dbReference type="HAMAP-Rule" id="MF_00634"/>
    </source>
</evidence>
<feature type="chain" id="PRO_1000212348" description="UPF0235 protein Helmi_20270">
    <location>
        <begin position="1"/>
        <end position="96"/>
    </location>
</feature>